<feature type="chain" id="PRO_1000059974" description="Large ribosomal subunit protein uL29">
    <location>
        <begin position="1"/>
        <end position="66"/>
    </location>
</feature>
<accession>A8F4R9</accession>
<keyword id="KW-1185">Reference proteome</keyword>
<keyword id="KW-0687">Ribonucleoprotein</keyword>
<keyword id="KW-0689">Ribosomal protein</keyword>
<gene>
    <name evidence="1" type="primary">rpmC</name>
    <name type="ordered locus">Tlet_0587</name>
</gene>
<sequence length="66" mass="8038">MKAAEIRNYSDEELKKLLLEKKKQLMDMRFQHAMGQLRNTAQIKEVRRDIARIRTILRERELGIRR</sequence>
<name>RL29_PSELT</name>
<protein>
    <recommendedName>
        <fullName evidence="1">Large ribosomal subunit protein uL29</fullName>
    </recommendedName>
    <alternativeName>
        <fullName evidence="2">50S ribosomal protein L29</fullName>
    </alternativeName>
</protein>
<evidence type="ECO:0000255" key="1">
    <source>
        <dbReference type="HAMAP-Rule" id="MF_00374"/>
    </source>
</evidence>
<evidence type="ECO:0000305" key="2"/>
<reference key="1">
    <citation type="submission" date="2007-08" db="EMBL/GenBank/DDBJ databases">
        <title>Complete sequence of Thermotoga lettingae TMO.</title>
        <authorList>
            <consortium name="US DOE Joint Genome Institute"/>
            <person name="Copeland A."/>
            <person name="Lucas S."/>
            <person name="Lapidus A."/>
            <person name="Barry K."/>
            <person name="Glavina del Rio T."/>
            <person name="Dalin E."/>
            <person name="Tice H."/>
            <person name="Pitluck S."/>
            <person name="Foster B."/>
            <person name="Bruce D."/>
            <person name="Schmutz J."/>
            <person name="Larimer F."/>
            <person name="Land M."/>
            <person name="Hauser L."/>
            <person name="Kyrpides N."/>
            <person name="Mikhailova N."/>
            <person name="Nelson K."/>
            <person name="Gogarten J.P."/>
            <person name="Noll K."/>
            <person name="Richardson P."/>
        </authorList>
    </citation>
    <scope>NUCLEOTIDE SEQUENCE [LARGE SCALE GENOMIC DNA]</scope>
    <source>
        <strain>ATCC BAA-301 / DSM 14385 / NBRC 107922 / TMO</strain>
    </source>
</reference>
<proteinExistence type="inferred from homology"/>
<dbReference type="EMBL" id="CP000812">
    <property type="protein sequence ID" value="ABV33153.1"/>
    <property type="molecule type" value="Genomic_DNA"/>
</dbReference>
<dbReference type="RefSeq" id="WP_012002634.1">
    <property type="nucleotide sequence ID" value="NZ_BSDV01000001.1"/>
</dbReference>
<dbReference type="SMR" id="A8F4R9"/>
<dbReference type="STRING" id="416591.Tlet_0587"/>
<dbReference type="KEGG" id="tle:Tlet_0587"/>
<dbReference type="eggNOG" id="COG0255">
    <property type="taxonomic scope" value="Bacteria"/>
</dbReference>
<dbReference type="HOGENOM" id="CLU_158491_5_2_0"/>
<dbReference type="OrthoDB" id="9815192at2"/>
<dbReference type="Proteomes" id="UP000002016">
    <property type="component" value="Chromosome"/>
</dbReference>
<dbReference type="GO" id="GO:0022625">
    <property type="term" value="C:cytosolic large ribosomal subunit"/>
    <property type="evidence" value="ECO:0007669"/>
    <property type="project" value="TreeGrafter"/>
</dbReference>
<dbReference type="GO" id="GO:0003735">
    <property type="term" value="F:structural constituent of ribosome"/>
    <property type="evidence" value="ECO:0007669"/>
    <property type="project" value="InterPro"/>
</dbReference>
<dbReference type="GO" id="GO:0006412">
    <property type="term" value="P:translation"/>
    <property type="evidence" value="ECO:0007669"/>
    <property type="project" value="UniProtKB-UniRule"/>
</dbReference>
<dbReference type="CDD" id="cd00427">
    <property type="entry name" value="Ribosomal_L29_HIP"/>
    <property type="match status" value="1"/>
</dbReference>
<dbReference type="FunFam" id="1.10.287.310:FF:000001">
    <property type="entry name" value="50S ribosomal protein L29"/>
    <property type="match status" value="1"/>
</dbReference>
<dbReference type="Gene3D" id="1.10.287.310">
    <property type="match status" value="1"/>
</dbReference>
<dbReference type="HAMAP" id="MF_00374">
    <property type="entry name" value="Ribosomal_uL29"/>
    <property type="match status" value="1"/>
</dbReference>
<dbReference type="InterPro" id="IPR050063">
    <property type="entry name" value="Ribosomal_protein_uL29"/>
</dbReference>
<dbReference type="InterPro" id="IPR001854">
    <property type="entry name" value="Ribosomal_uL29"/>
</dbReference>
<dbReference type="InterPro" id="IPR018254">
    <property type="entry name" value="Ribosomal_uL29_CS"/>
</dbReference>
<dbReference type="InterPro" id="IPR036049">
    <property type="entry name" value="Ribosomal_uL29_sf"/>
</dbReference>
<dbReference type="NCBIfam" id="TIGR00012">
    <property type="entry name" value="L29"/>
    <property type="match status" value="1"/>
</dbReference>
<dbReference type="PANTHER" id="PTHR10916">
    <property type="entry name" value="60S RIBOSOMAL PROTEIN L35/50S RIBOSOMAL PROTEIN L29"/>
    <property type="match status" value="1"/>
</dbReference>
<dbReference type="PANTHER" id="PTHR10916:SF0">
    <property type="entry name" value="LARGE RIBOSOMAL SUBUNIT PROTEIN UL29C"/>
    <property type="match status" value="1"/>
</dbReference>
<dbReference type="Pfam" id="PF00831">
    <property type="entry name" value="Ribosomal_L29"/>
    <property type="match status" value="1"/>
</dbReference>
<dbReference type="SUPFAM" id="SSF46561">
    <property type="entry name" value="Ribosomal protein L29 (L29p)"/>
    <property type="match status" value="1"/>
</dbReference>
<dbReference type="PROSITE" id="PS00579">
    <property type="entry name" value="RIBOSOMAL_L29"/>
    <property type="match status" value="1"/>
</dbReference>
<organism>
    <name type="scientific">Pseudothermotoga lettingae (strain ATCC BAA-301 / DSM 14385 / NBRC 107922 / TMO)</name>
    <name type="common">Thermotoga lettingae</name>
    <dbReference type="NCBI Taxonomy" id="416591"/>
    <lineage>
        <taxon>Bacteria</taxon>
        <taxon>Thermotogati</taxon>
        <taxon>Thermotogota</taxon>
        <taxon>Thermotogae</taxon>
        <taxon>Thermotogales</taxon>
        <taxon>Thermotogaceae</taxon>
        <taxon>Pseudothermotoga</taxon>
    </lineage>
</organism>
<comment type="similarity">
    <text evidence="1">Belongs to the universal ribosomal protein uL29 family.</text>
</comment>